<name>RR4_OROMI</name>
<comment type="function">
    <text evidence="1">One of the primary rRNA binding proteins, it binds directly to 16S rRNA where it nucleates assembly of the body of the 30S subunit.</text>
</comment>
<comment type="function">
    <text evidence="1">With S5 and S12 plays an important role in translational accuracy.</text>
</comment>
<comment type="subunit">
    <text evidence="1">Part of the 30S ribosomal subunit. Contacts protein S5. The interaction surface between S4 and S5 is involved in control of translational fidelity (By similarity).</text>
</comment>
<comment type="subcellular location">
    <subcellularLocation>
        <location>Plastid</location>
    </subcellularLocation>
</comment>
<comment type="similarity">
    <text evidence="2">Belongs to the universal ribosomal protein uS4 family.</text>
</comment>
<dbReference type="EMBL" id="AJ007723">
    <property type="protein sequence ID" value="CAA07624.1"/>
    <property type="molecule type" value="Genomic_DNA"/>
</dbReference>
<dbReference type="SMR" id="O78678"/>
<dbReference type="GO" id="GO:0009536">
    <property type="term" value="C:plastid"/>
    <property type="evidence" value="ECO:0007669"/>
    <property type="project" value="UniProtKB-SubCell"/>
</dbReference>
<dbReference type="GO" id="GO:0015935">
    <property type="term" value="C:small ribosomal subunit"/>
    <property type="evidence" value="ECO:0007669"/>
    <property type="project" value="InterPro"/>
</dbReference>
<dbReference type="GO" id="GO:0019843">
    <property type="term" value="F:rRNA binding"/>
    <property type="evidence" value="ECO:0007669"/>
    <property type="project" value="UniProtKB-KW"/>
</dbReference>
<dbReference type="GO" id="GO:0003735">
    <property type="term" value="F:structural constituent of ribosome"/>
    <property type="evidence" value="ECO:0007669"/>
    <property type="project" value="InterPro"/>
</dbReference>
<dbReference type="GO" id="GO:0042274">
    <property type="term" value="P:ribosomal small subunit biogenesis"/>
    <property type="evidence" value="ECO:0007669"/>
    <property type="project" value="TreeGrafter"/>
</dbReference>
<dbReference type="GO" id="GO:0006412">
    <property type="term" value="P:translation"/>
    <property type="evidence" value="ECO:0007669"/>
    <property type="project" value="InterPro"/>
</dbReference>
<dbReference type="CDD" id="cd00165">
    <property type="entry name" value="S4"/>
    <property type="match status" value="1"/>
</dbReference>
<dbReference type="FunFam" id="1.10.1050.10:FF:000002">
    <property type="entry name" value="30S ribosomal protein S4, chloroplastic"/>
    <property type="match status" value="1"/>
</dbReference>
<dbReference type="FunFam" id="3.10.290.10:FF:000081">
    <property type="entry name" value="30S ribosomal protein S4, chloroplastic"/>
    <property type="match status" value="1"/>
</dbReference>
<dbReference type="Gene3D" id="1.10.1050.10">
    <property type="entry name" value="Ribosomal Protein S4 Delta 41, Chain A, domain 1"/>
    <property type="match status" value="1"/>
</dbReference>
<dbReference type="Gene3D" id="3.10.290.10">
    <property type="entry name" value="RNA-binding S4 domain"/>
    <property type="match status" value="1"/>
</dbReference>
<dbReference type="HAMAP" id="MF_01306_B">
    <property type="entry name" value="Ribosomal_uS4_B"/>
    <property type="match status" value="1"/>
</dbReference>
<dbReference type="InterPro" id="IPR022801">
    <property type="entry name" value="Ribosomal_uS4"/>
</dbReference>
<dbReference type="InterPro" id="IPR005709">
    <property type="entry name" value="Ribosomal_uS4_bac-type"/>
</dbReference>
<dbReference type="InterPro" id="IPR018079">
    <property type="entry name" value="Ribosomal_uS4_CS"/>
</dbReference>
<dbReference type="InterPro" id="IPR001912">
    <property type="entry name" value="Ribosomal_uS4_N"/>
</dbReference>
<dbReference type="InterPro" id="IPR002942">
    <property type="entry name" value="S4_RNA-bd"/>
</dbReference>
<dbReference type="InterPro" id="IPR036986">
    <property type="entry name" value="S4_RNA-bd_sf"/>
</dbReference>
<dbReference type="NCBIfam" id="NF003717">
    <property type="entry name" value="PRK05327.1"/>
    <property type="match status" value="1"/>
</dbReference>
<dbReference type="NCBIfam" id="TIGR01017">
    <property type="entry name" value="rpsD_bact"/>
    <property type="match status" value="1"/>
</dbReference>
<dbReference type="PANTHER" id="PTHR11831">
    <property type="entry name" value="30S 40S RIBOSOMAL PROTEIN"/>
    <property type="match status" value="1"/>
</dbReference>
<dbReference type="PANTHER" id="PTHR11831:SF4">
    <property type="entry name" value="SMALL RIBOSOMAL SUBUNIT PROTEIN US4M"/>
    <property type="match status" value="1"/>
</dbReference>
<dbReference type="Pfam" id="PF00163">
    <property type="entry name" value="Ribosomal_S4"/>
    <property type="match status" value="1"/>
</dbReference>
<dbReference type="Pfam" id="PF01479">
    <property type="entry name" value="S4"/>
    <property type="match status" value="1"/>
</dbReference>
<dbReference type="SMART" id="SM01390">
    <property type="entry name" value="Ribosomal_S4"/>
    <property type="match status" value="1"/>
</dbReference>
<dbReference type="SMART" id="SM00363">
    <property type="entry name" value="S4"/>
    <property type="match status" value="1"/>
</dbReference>
<dbReference type="SUPFAM" id="SSF55174">
    <property type="entry name" value="Alpha-L RNA-binding motif"/>
    <property type="match status" value="1"/>
</dbReference>
<dbReference type="PROSITE" id="PS00632">
    <property type="entry name" value="RIBOSOMAL_S4"/>
    <property type="match status" value="1"/>
</dbReference>
<dbReference type="PROSITE" id="PS50889">
    <property type="entry name" value="S4"/>
    <property type="match status" value="1"/>
</dbReference>
<feature type="chain" id="PRO_0000132640" description="Small ribosomal subunit protein uS4c">
    <location>
        <begin position="1"/>
        <end position="203"/>
    </location>
</feature>
<feature type="domain" description="S4 RNA-binding">
    <location>
        <begin position="89"/>
        <end position="152"/>
    </location>
</feature>
<proteinExistence type="inferred from homology"/>
<gene>
    <name type="primary">rps4</name>
</gene>
<organism>
    <name type="scientific">Orobanche minor</name>
    <name type="common">Small broomrape</name>
    <name type="synonym">Hellroot</name>
    <dbReference type="NCBI Taxonomy" id="36748"/>
    <lineage>
        <taxon>Eukaryota</taxon>
        <taxon>Viridiplantae</taxon>
        <taxon>Streptophyta</taxon>
        <taxon>Embryophyta</taxon>
        <taxon>Tracheophyta</taxon>
        <taxon>Spermatophyta</taxon>
        <taxon>Magnoliopsida</taxon>
        <taxon>eudicotyledons</taxon>
        <taxon>Gunneridae</taxon>
        <taxon>Pentapetalae</taxon>
        <taxon>asterids</taxon>
        <taxon>lamiids</taxon>
        <taxon>Lamiales</taxon>
        <taxon>Orobanchaceae</taxon>
        <taxon>Orobancheae</taxon>
        <taxon>Orobanche</taxon>
    </lineage>
</organism>
<protein>
    <recommendedName>
        <fullName evidence="2">Small ribosomal subunit protein uS4c</fullName>
    </recommendedName>
    <alternativeName>
        <fullName>Plastid 30S ribosomal protein S4</fullName>
    </alternativeName>
</protein>
<evidence type="ECO:0000250" key="1"/>
<evidence type="ECO:0000305" key="2"/>
<sequence length="203" mass="23686">MSRYRGPRFKKIRRLGALPGLTNKRPKAEKDLINQSRFVKKSQYRIRLEEKQKLRFHYGLTERQLLKYIRIAGKAKGSTGQVLLQLLEMRLDNILFRLGMALTIPAARQLVNHRHVLVNGRIVDIPSYRCKPLDIITAKDKQQSRTLIQNSLNSSPHAKIPNHLTLDLFQYKGIVNQIINSKWVGLKINEFLIVEYYSRQIKT</sequence>
<accession>O78678</accession>
<geneLocation type="non-photosynthetic plastid"/>
<keyword id="KW-0934">Plastid</keyword>
<keyword id="KW-0687">Ribonucleoprotein</keyword>
<keyword id="KW-0689">Ribosomal protein</keyword>
<keyword id="KW-0694">RNA-binding</keyword>
<keyword id="KW-0699">rRNA-binding</keyword>
<reference key="1">
    <citation type="journal article" date="1998" name="Genetics">
        <title>A subset of conserved tRNA genes in plastid DNA of nongreen plants.</title>
        <authorList>
            <person name="Lohan A.J."/>
            <person name="Wolfe K.H."/>
        </authorList>
    </citation>
    <scope>NUCLEOTIDE SEQUENCE [GENOMIC DNA]</scope>
</reference>